<name>NA239_NEMVE</name>
<feature type="signal peptide" evidence="2">
    <location>
        <begin position="1"/>
        <end position="20"/>
    </location>
</feature>
<feature type="propeptide" id="PRO_0000398313" evidence="9">
    <location>
        <begin position="21"/>
        <end position="36"/>
    </location>
</feature>
<feature type="chain" id="PRO_0000398314" description="N.vectensis toxin 1 5" evidence="10">
    <location>
        <begin position="39"/>
        <end position="85"/>
    </location>
</feature>
<feature type="disulfide bond" evidence="1">
    <location>
        <begin position="42"/>
        <end position="82"/>
    </location>
</feature>
<feature type="disulfide bond" evidence="1">
    <location>
        <begin position="44"/>
        <end position="72"/>
    </location>
</feature>
<feature type="disulfide bond" evidence="1">
    <location>
        <begin position="65"/>
        <end position="83"/>
    </location>
</feature>
<feature type="splice variant" id="VSP_039747" description="In isoform 2." evidence="9">
    <original>RDMMSDDELDFHLSKRGIPCACDSDGPDIRSASLSGIVWMGSCPSGWKKCKSYYSIVADCCNQ</original>
    <variation>K</variation>
    <location>
        <begin position="23"/>
        <end position="85"/>
    </location>
</feature>
<sequence length="85" mass="9268">MASFKIVIVCLALLVAVACARRRDMMSDDELDFHLSKRGIPCACDSDGPDIRSASLSGIVWMGSCPSGWKKCKSYYSIVADCCNQ</sequence>
<gene>
    <name type="ORF">v1g113166</name>
</gene>
<evidence type="ECO:0000250" key="1">
    <source>
        <dbReference type="UniProtKB" id="P19651"/>
    </source>
</evidence>
<evidence type="ECO:0000255" key="2"/>
<evidence type="ECO:0000269" key="3">
    <source>
    </source>
</evidence>
<evidence type="ECO:0000269" key="4">
    <source>
    </source>
</evidence>
<evidence type="ECO:0000269" key="5">
    <source>
    </source>
</evidence>
<evidence type="ECO:0000269" key="6">
    <source>
    </source>
</evidence>
<evidence type="ECO:0000303" key="7">
    <source>
    </source>
</evidence>
<evidence type="ECO:0000303" key="8">
    <source>
    </source>
</evidence>
<evidence type="ECO:0000305" key="9"/>
<evidence type="ECO:0000305" key="10">
    <source>
    </source>
</evidence>
<reference key="1">
    <citation type="journal article" date="2007" name="Science">
        <title>Sea anemone genome reveals ancestral eumetazoan gene repertoire and genomic organization.</title>
        <authorList>
            <person name="Putnam N.H."/>
            <person name="Srivastava M."/>
            <person name="Hellsten U."/>
            <person name="Dirks B."/>
            <person name="Chapman J."/>
            <person name="Salamov A."/>
            <person name="Terry A."/>
            <person name="Shapiro H."/>
            <person name="Lindquist E."/>
            <person name="Kapitonov V.V."/>
            <person name="Jurka J."/>
            <person name="Genikhovich G."/>
            <person name="Grigoriev I.V."/>
            <person name="Lucas S.M."/>
            <person name="Steele R.E."/>
            <person name="Finnerty J.R."/>
            <person name="Technau U."/>
            <person name="Martindale M.Q."/>
            <person name="Rokhsar D.S."/>
        </authorList>
    </citation>
    <scope>NUCLEOTIDE SEQUENCE [LARGE SCALE GENOMIC DNA]</scope>
    <source>
        <strain>CH2 X CH6</strain>
    </source>
</reference>
<reference key="2">
    <citation type="journal article" date="2008" name="J. Mol. Biol.">
        <title>Intron retention as a posttranscriptional regulatory mechanism of neurotoxin expression at early life stages of the starlet anemone Nematostella vectensis.</title>
        <authorList>
            <person name="Moran Y."/>
            <person name="Weinberger H."/>
            <person name="Reitzel A.M."/>
            <person name="Sullivan J.C."/>
            <person name="Kahn R."/>
            <person name="Gordon D."/>
            <person name="Finnerty J.R."/>
            <person name="Gurevitz M."/>
        </authorList>
    </citation>
    <scope>FUNCTION</scope>
    <scope>ALTERNATIVE SPLICING</scope>
    <scope>DEVELOPMENTAL STAGE</scope>
    <scope>TOXIC DOSE</scope>
    <source>
        <strain>Sippewissett Marsh</strain>
    </source>
</reference>
<reference key="3">
    <citation type="journal article" date="2012" name="Proc. R. Soc. B">
        <title>Neurotoxin localization to ectodermal gland cells uncovers an alternative mechanism of venom delivery in sea anemones.</title>
        <authorList>
            <person name="Moran Y."/>
            <person name="Genikhovich G."/>
            <person name="Gordon D."/>
            <person name="Wienkoop S."/>
            <person name="Zenkert C."/>
            <person name="Ozbek S."/>
            <person name="Technau U."/>
            <person name="Gurevitz M."/>
        </authorList>
    </citation>
    <scope>FUNCTION</scope>
    <scope>TISSUE SPECIFICITY</scope>
    <scope>DEVELOPMENTAL STAGE</scope>
</reference>
<reference key="4">
    <citation type="journal article" date="2008" name="Mol. Biol. Evol.">
        <title>Concerted evolution of sea anemone neurotoxin genes is revealed through analysis of the Nematostella vectensis genome.</title>
        <authorList>
            <person name="Moran Y."/>
            <person name="Weinberger H."/>
            <person name="Sullivan J.C."/>
            <person name="Reitzel A.M."/>
            <person name="Finnerty J.R."/>
            <person name="Gurevitz M."/>
        </authorList>
    </citation>
    <scope>NOMENCLATURE</scope>
</reference>
<reference key="5">
    <citation type="journal article" date="2018" name="Elife">
        <title>Dynamics of venom composition across a complex life cycle.</title>
        <authorList>
            <person name="Columbus-Shenkar Y.Y."/>
            <person name="Sachkova M.Y."/>
            <person name="Macrander J."/>
            <person name="Fridrich A."/>
            <person name="Modepalli V."/>
            <person name="Reitzel A.M."/>
            <person name="Sunagar K."/>
            <person name="Moran Y."/>
        </authorList>
    </citation>
    <scope>FUNCTION</scope>
    <scope>DEVELOPMENTAL STAGE</scope>
</reference>
<reference key="6">
    <citation type="journal article" date="2019" name="Mol. Biol. Evol.">
        <title>The birth and death of toxins with distinct functions: a case study in the sea anemone Nematostella.</title>
        <authorList>
            <person name="Sachkova M.Y."/>
            <person name="Singer S.A."/>
            <person name="Macrander J."/>
            <person name="Reitzel A.M."/>
            <person name="Peigneur S."/>
            <person name="Tytgat J."/>
            <person name="Moran Y."/>
        </authorList>
    </citation>
    <scope>FUNCTION</scope>
    <scope>IDENTIFICATION BY MASS SPECTROMETRY</scope>
    <scope>DEVELOPMENTAL STAGE</scope>
</reference>
<keyword id="KW-0025">Alternative splicing</keyword>
<keyword id="KW-0165">Cleavage on pair of basic residues</keyword>
<keyword id="KW-1015">Disulfide bond</keyword>
<keyword id="KW-0872">Ion channel impairing toxin</keyword>
<keyword id="KW-0528">Neurotoxin</keyword>
<keyword id="KW-1185">Reference proteome</keyword>
<keyword id="KW-0964">Secreted</keyword>
<keyword id="KW-0732">Signal</keyword>
<keyword id="KW-0800">Toxin</keyword>
<keyword id="KW-0738">Voltage-gated sodium channel impairing toxin</keyword>
<protein>
    <recommendedName>
        <fullName evidence="8">N.vectensis toxin 1 5</fullName>
        <shortName evidence="8">Nv1</shortName>
    </recommendedName>
    <alternativeName>
        <fullName evidence="7">Neurotoxin Nv1-116.39.1</fullName>
    </alternativeName>
</protein>
<accession>P0CH46</accession>
<accession>A7SCE0</accession>
<comment type="function">
    <text evidence="3 4 5 6">Binds to site 3 of voltage-gated sodium channels and inhibits the inactivation process (PubMed:18538344). Is highly active on DmNav1/TipE (drosophila) and is only extremely weakly active on rat Nav1.4-beta-1/SCN4A-SCN1B, and on human Nav1.5-beta-1/SCN5A-beta-1 (PubMed:18538344). This reveals high specificity for arthropod over mammalian channels (PubMed:18538344). In vivo, when released into the medium, this recombinant toxin induces impaired swimming, paralysis and death of the crustacean A.nauplii within several hours (PubMed:22048953). Also causes paralysis of cherry shrimps immediately after injection at very low doses (PubMed:29424690). Its effect on zebrafish (D.rerio) larvae is also rapid, since it induces tail twitching accompanied by impaired swimming after 20 minutes and complete paralysis within 45 minutes (PubMed:22048953). It has also been observed to cause death of zebrafish larvae within 1 hour (PubMed:31134275).</text>
</comment>
<comment type="subcellular location">
    <subcellularLocation>
        <location evidence="3">Secreted</location>
    </subcellularLocation>
</comment>
<comment type="alternative products">
    <event type="alternative splicing"/>
    <isoform>
        <id>P0CH46-1</id>
        <name>1</name>
        <sequence type="displayed"/>
    </isoform>
    <isoform>
        <id>P0CH46-2</id>
        <name>2</name>
        <name>truncated</name>
        <sequence type="described" ref="VSP_039747"/>
    </isoform>
    <text>Intron retention discovered for all transcripts, no experimental confirmation available for this specific sequence.</text>
</comment>
<comment type="tissue specificity">
    <text evidence="4 5">Expressed in ectodermal glands and in clumps outside of the extodermal layer (PubMed:22048953). Is not expressed in nematocytes (PubMed:22048953). In adult female tissues, shows similar expression levels in mesenteries (gametes-producing tissue), tentacles, pharynx and physa (PubMed:29424690).</text>
</comment>
<comment type="developmental stage">
    <text evidence="3 4 5 6">Is detected in unfertilized eggs (at protein level) (PubMed:29424690, PubMed:31134275). Is also detected in late planulae, primary polyps and adults (both females and males) (at protein level) (PubMed:22048953, PubMed:29424690). Nv1 is transcribed throughout the complete life cycle and is found at multiple developmental stages including unfertilized eggs, blastulae, gastrulae, early planulae, planulae, metamorphosing planulae, primary polyps, juvenile polyps (2 and 4 months old), adult males, and adult females, with highest levels in juvenile polyps and adults (PubMed:18538344, PubMed:29424690). Importantly, Nv1 transcripts are not spliced in the embryo and planula due to intron retention and therefore Nv1 can be considered purely an adult toxin (PubMed:18538344).</text>
</comment>
<comment type="toxic dose">
    <text evidence="3">PD(50) is 76 nmol/kg into blowfly larvae.</text>
</comment>
<comment type="miscellaneous">
    <text>Nv1 toxin seems to be encoded by 8 different genes. 4 of them code for identical precursors, whereas 4 others code for very similar precursors. In the genome draft, 6 additional loci are also correlated to Nv1 toxin, but they are not predicted to be functional genes. This high similarity may be explained by concerted evolution.</text>
</comment>
<comment type="miscellaneous">
    <text evidence="9">The primary structure of the mature peptide is identical in 9 entries (AC B1NWS4, AC B1NWS1, AC B1NWR6, AC P0CH90, AC P0CH46, AC B1NWS8, AC A7SCE5, AC B1NWR7 and AC P0CH45). Additional information can be found in entry AC B1NWS4.</text>
</comment>
<comment type="miscellaneous">
    <molecule>Isoform 2</molecule>
    <text evidence="9">Due to an intron retention observed only in early life stages (embryo and planula).</text>
</comment>
<comment type="miscellaneous">
    <text evidence="3">Negative results: has no activity on the rat brain channel Nav1.2a-beta-1/SCN2A-SCN1B.</text>
</comment>
<comment type="similarity">
    <text evidence="9">Belongs to the sea anemone sodium channel inhibitory toxin family. Type II subfamily.</text>
</comment>
<comment type="caution">
    <text evidence="9">This toxin precursor is identical to three other precursors (AC B1NWR6, AC B1NWS4 and AC B1NWR7). AC B1NWR6 shows 8 variants that could also be associated with this gene.</text>
</comment>
<comment type="sequence caution" evidence="9">
    <conflict type="erroneous gene model prediction">
        <sequence resource="EMBL-CDS" id="EDO38674"/>
    </conflict>
</comment>
<dbReference type="EMBL" id="DS469622">
    <property type="protein sequence ID" value="EDO38674.1"/>
    <property type="status" value="ALT_SEQ"/>
    <property type="molecule type" value="Genomic_DNA"/>
</dbReference>
<dbReference type="RefSeq" id="XP_001630733.1">
    <property type="nucleotide sequence ID" value="XM_001630683.1"/>
</dbReference>
<dbReference type="RefSeq" id="XP_001630735.1">
    <property type="nucleotide sequence ID" value="XM_001630685.1"/>
</dbReference>
<dbReference type="RefSeq" id="XP_001630737.1">
    <property type="nucleotide sequence ID" value="XM_001630687.1"/>
</dbReference>
<dbReference type="RefSeq" id="XP_001630739.1">
    <property type="nucleotide sequence ID" value="XM_001630689.1"/>
</dbReference>
<dbReference type="SMR" id="P0CH46"/>
<dbReference type="HOGENOM" id="CLU_2944416_0_0_1"/>
<dbReference type="InParanoid" id="P0CH46"/>
<dbReference type="PhylomeDB" id="P0CH46"/>
<dbReference type="Proteomes" id="UP000001593">
    <property type="component" value="Unassembled WGS sequence"/>
</dbReference>
<dbReference type="GO" id="GO:0005576">
    <property type="term" value="C:extracellular region"/>
    <property type="evidence" value="ECO:0007669"/>
    <property type="project" value="UniProtKB-SubCell"/>
</dbReference>
<dbReference type="GO" id="GO:0017080">
    <property type="term" value="F:sodium channel regulator activity"/>
    <property type="evidence" value="ECO:0007669"/>
    <property type="project" value="UniProtKB-KW"/>
</dbReference>
<dbReference type="GO" id="GO:0090729">
    <property type="term" value="F:toxin activity"/>
    <property type="evidence" value="ECO:0007669"/>
    <property type="project" value="UniProtKB-KW"/>
</dbReference>
<dbReference type="Gene3D" id="2.20.20.10">
    <property type="entry name" value="Anthopleurin-A"/>
    <property type="match status" value="1"/>
</dbReference>
<dbReference type="InterPro" id="IPR023355">
    <property type="entry name" value="Myo_ane_neurotoxin_sf"/>
</dbReference>
<dbReference type="Pfam" id="PF00706">
    <property type="entry name" value="Toxin_4"/>
    <property type="match status" value="1"/>
</dbReference>
<dbReference type="SUPFAM" id="SSF57392">
    <property type="entry name" value="Defensin-like"/>
    <property type="match status" value="1"/>
</dbReference>
<proteinExistence type="evidence at protein level"/>
<organism>
    <name type="scientific">Nematostella vectensis</name>
    <name type="common">Starlet sea anemone</name>
    <dbReference type="NCBI Taxonomy" id="45351"/>
    <lineage>
        <taxon>Eukaryota</taxon>
        <taxon>Metazoa</taxon>
        <taxon>Cnidaria</taxon>
        <taxon>Anthozoa</taxon>
        <taxon>Hexacorallia</taxon>
        <taxon>Actiniaria</taxon>
        <taxon>Edwardsiidae</taxon>
        <taxon>Nematostella</taxon>
    </lineage>
</organism>